<keyword id="KW-0046">Antibiotic resistance</keyword>
<keyword id="KW-0997">Cell inner membrane</keyword>
<keyword id="KW-1003">Cell membrane</keyword>
<keyword id="KW-0133">Cell shape</keyword>
<keyword id="KW-0961">Cell wall biogenesis/degradation</keyword>
<keyword id="KW-0378">Hydrolase</keyword>
<keyword id="KW-0472">Membrane</keyword>
<keyword id="KW-0573">Peptidoglycan synthesis</keyword>
<keyword id="KW-0812">Transmembrane</keyword>
<keyword id="KW-1133">Transmembrane helix</keyword>
<name>UPPP_THEP1</name>
<comment type="function">
    <text evidence="1">Catalyzes the dephosphorylation of undecaprenyl diphosphate (UPP). Confers resistance to bacitracin.</text>
</comment>
<comment type="catalytic activity">
    <reaction evidence="1">
        <text>di-trans,octa-cis-undecaprenyl diphosphate + H2O = di-trans,octa-cis-undecaprenyl phosphate + phosphate + H(+)</text>
        <dbReference type="Rhea" id="RHEA:28094"/>
        <dbReference type="ChEBI" id="CHEBI:15377"/>
        <dbReference type="ChEBI" id="CHEBI:15378"/>
        <dbReference type="ChEBI" id="CHEBI:43474"/>
        <dbReference type="ChEBI" id="CHEBI:58405"/>
        <dbReference type="ChEBI" id="CHEBI:60392"/>
        <dbReference type="EC" id="3.6.1.27"/>
    </reaction>
</comment>
<comment type="subcellular location">
    <subcellularLocation>
        <location evidence="1">Cell inner membrane</location>
        <topology evidence="1">Multi-pass membrane protein</topology>
    </subcellularLocation>
</comment>
<comment type="miscellaneous">
    <text>Bacitracin is thought to be involved in the inhibition of peptidoglycan synthesis by sequestering undecaprenyl diphosphate, thereby reducing the pool of lipid carrier available.</text>
</comment>
<comment type="similarity">
    <text evidence="1">Belongs to the UppP family.</text>
</comment>
<evidence type="ECO:0000255" key="1">
    <source>
        <dbReference type="HAMAP-Rule" id="MF_01006"/>
    </source>
</evidence>
<gene>
    <name evidence="1" type="primary">uppP</name>
    <name type="ordered locus">Tpet_0034</name>
</gene>
<feature type="chain" id="PRO_1000062819" description="Undecaprenyl-diphosphatase">
    <location>
        <begin position="1"/>
        <end position="237"/>
    </location>
</feature>
<feature type="transmembrane region" description="Helical" evidence="1">
    <location>
        <begin position="38"/>
        <end position="58"/>
    </location>
</feature>
<feature type="transmembrane region" description="Helical" evidence="1">
    <location>
        <begin position="65"/>
        <end position="85"/>
    </location>
</feature>
<feature type="transmembrane region" description="Helical" evidence="1">
    <location>
        <begin position="92"/>
        <end position="112"/>
    </location>
</feature>
<feature type="transmembrane region" description="Helical" evidence="1">
    <location>
        <begin position="126"/>
        <end position="146"/>
    </location>
</feature>
<feature type="transmembrane region" description="Helical" evidence="1">
    <location>
        <begin position="166"/>
        <end position="186"/>
    </location>
</feature>
<feature type="transmembrane region" description="Helical" evidence="1">
    <location>
        <begin position="191"/>
        <end position="211"/>
    </location>
</feature>
<feature type="transmembrane region" description="Helical" evidence="1">
    <location>
        <begin position="217"/>
        <end position="237"/>
    </location>
</feature>
<organism>
    <name type="scientific">Thermotoga petrophila (strain ATCC BAA-488 / DSM 13995 / JCM 10881 / RKU-1)</name>
    <dbReference type="NCBI Taxonomy" id="390874"/>
    <lineage>
        <taxon>Bacteria</taxon>
        <taxon>Thermotogati</taxon>
        <taxon>Thermotogota</taxon>
        <taxon>Thermotogae</taxon>
        <taxon>Thermotogales</taxon>
        <taxon>Thermotogaceae</taxon>
        <taxon>Thermotoga</taxon>
    </lineage>
</organism>
<reference key="1">
    <citation type="submission" date="2007-05" db="EMBL/GenBank/DDBJ databases">
        <title>Complete sequence of Thermotoga petrophila RKU-1.</title>
        <authorList>
            <consortium name="US DOE Joint Genome Institute"/>
            <person name="Copeland A."/>
            <person name="Lucas S."/>
            <person name="Lapidus A."/>
            <person name="Barry K."/>
            <person name="Glavina del Rio T."/>
            <person name="Dalin E."/>
            <person name="Tice H."/>
            <person name="Pitluck S."/>
            <person name="Sims D."/>
            <person name="Brettin T."/>
            <person name="Bruce D."/>
            <person name="Detter J.C."/>
            <person name="Han C."/>
            <person name="Tapia R."/>
            <person name="Schmutz J."/>
            <person name="Larimer F."/>
            <person name="Land M."/>
            <person name="Hauser L."/>
            <person name="Kyrpides N."/>
            <person name="Mikhailova N."/>
            <person name="Nelson K."/>
            <person name="Gogarten J.P."/>
            <person name="Noll K."/>
            <person name="Richardson P."/>
        </authorList>
    </citation>
    <scope>NUCLEOTIDE SEQUENCE [LARGE SCALE GENOMIC DNA]</scope>
    <source>
        <strain>ATCC BAA-488 / DSM 13995 / JCM 10881 / RKU-1</strain>
    </source>
</reference>
<dbReference type="EC" id="3.6.1.27" evidence="1"/>
<dbReference type="EMBL" id="CP000702">
    <property type="protein sequence ID" value="ABQ46063.1"/>
    <property type="molecule type" value="Genomic_DNA"/>
</dbReference>
<dbReference type="RefSeq" id="WP_011942740.1">
    <property type="nucleotide sequence ID" value="NC_009486.1"/>
</dbReference>
<dbReference type="SMR" id="A5IIP0"/>
<dbReference type="STRING" id="390874.Tpet_0034"/>
<dbReference type="KEGG" id="tpt:Tpet_0034"/>
<dbReference type="eggNOG" id="COG1968">
    <property type="taxonomic scope" value="Bacteria"/>
</dbReference>
<dbReference type="HOGENOM" id="CLU_060296_1_2_0"/>
<dbReference type="Proteomes" id="UP000006558">
    <property type="component" value="Chromosome"/>
</dbReference>
<dbReference type="GO" id="GO:0005886">
    <property type="term" value="C:plasma membrane"/>
    <property type="evidence" value="ECO:0007669"/>
    <property type="project" value="UniProtKB-SubCell"/>
</dbReference>
<dbReference type="GO" id="GO:0050380">
    <property type="term" value="F:undecaprenyl-diphosphatase activity"/>
    <property type="evidence" value="ECO:0007669"/>
    <property type="project" value="UniProtKB-UniRule"/>
</dbReference>
<dbReference type="GO" id="GO:0071555">
    <property type="term" value="P:cell wall organization"/>
    <property type="evidence" value="ECO:0007669"/>
    <property type="project" value="UniProtKB-KW"/>
</dbReference>
<dbReference type="GO" id="GO:0009252">
    <property type="term" value="P:peptidoglycan biosynthetic process"/>
    <property type="evidence" value="ECO:0007669"/>
    <property type="project" value="UniProtKB-KW"/>
</dbReference>
<dbReference type="GO" id="GO:0008360">
    <property type="term" value="P:regulation of cell shape"/>
    <property type="evidence" value="ECO:0007669"/>
    <property type="project" value="UniProtKB-KW"/>
</dbReference>
<dbReference type="GO" id="GO:0046677">
    <property type="term" value="P:response to antibiotic"/>
    <property type="evidence" value="ECO:0007669"/>
    <property type="project" value="UniProtKB-UniRule"/>
</dbReference>
<dbReference type="HAMAP" id="MF_01006">
    <property type="entry name" value="Undec_diphosphatase"/>
    <property type="match status" value="1"/>
</dbReference>
<dbReference type="InterPro" id="IPR003824">
    <property type="entry name" value="UppP"/>
</dbReference>
<dbReference type="PANTHER" id="PTHR30622">
    <property type="entry name" value="UNDECAPRENYL-DIPHOSPHATASE"/>
    <property type="match status" value="1"/>
</dbReference>
<dbReference type="PANTHER" id="PTHR30622:SF4">
    <property type="entry name" value="UNDECAPRENYL-DIPHOSPHATASE"/>
    <property type="match status" value="1"/>
</dbReference>
<dbReference type="Pfam" id="PF02673">
    <property type="entry name" value="BacA"/>
    <property type="match status" value="1"/>
</dbReference>
<sequence length="237" mass="26182">MDLLLGIIQGLTEFLPVSSSGHLTLLSHLLKTDLNAYQTAVLHLGTLVSVVLFAFDGIRRSLRSWRIILNLIVSTIPAGVFGVLFEKQIDQLFSSPRFLPLFFSVTALILMFTRYSSSGEKRMENMSFLDALLVGIAQLFALFPGISRSGITVSSLLFMKYRGEDALQYSFLMSIPVVLGAGILGLEKGNITILAPIFAFLSGLFALYVLSRSVRSGKIWQFSYYCLFVAILSYLVG</sequence>
<proteinExistence type="inferred from homology"/>
<accession>A5IIP0</accession>
<protein>
    <recommendedName>
        <fullName evidence="1">Undecaprenyl-diphosphatase</fullName>
        <ecNumber evidence="1">3.6.1.27</ecNumber>
    </recommendedName>
    <alternativeName>
        <fullName evidence="1">Bacitracin resistance protein</fullName>
    </alternativeName>
    <alternativeName>
        <fullName evidence="1">Undecaprenyl pyrophosphate phosphatase</fullName>
    </alternativeName>
</protein>